<comment type="function">
    <text evidence="1">Murein endopeptidase that cleaves the D-alanyl-meso-2,6-diamino-pimelyl amide bond that connects peptidoglycan strands. Likely plays a role in the removal of murein from the sacculus.</text>
</comment>
<comment type="cofactor">
    <cofactor evidence="1">
        <name>Zn(2+)</name>
        <dbReference type="ChEBI" id="CHEBI:29105"/>
    </cofactor>
    <text evidence="1">Binds 2 Zn(2+) ions per subunit. Zn(2+) ion 1 is bound in the active site. Zn(2+) ion 2 is bound at the dimer interface by residues from both subunits.</text>
</comment>
<comment type="subunit">
    <text evidence="1">Dimer.</text>
</comment>
<comment type="subcellular location">
    <subcellularLocation>
        <location evidence="1">Periplasm</location>
    </subcellularLocation>
</comment>
<comment type="similarity">
    <text evidence="1">Belongs to the peptidase M74 family.</text>
</comment>
<evidence type="ECO:0000255" key="1">
    <source>
        <dbReference type="HAMAP-Rule" id="MF_01623"/>
    </source>
</evidence>
<evidence type="ECO:0000256" key="2">
    <source>
        <dbReference type="SAM" id="MobiDB-lite"/>
    </source>
</evidence>
<sequence>MKKTAIALLAWFVSSASLAATPWQKITHPVPGAAQSIGSFANGCIIGADTLPVQSDNYQVMRTDQRRYFGHPDLVMFIQRLSHQAQQRGLGTVLIGDMGMPAGGRFNGGHASHQTGLDVDIFLQLPKTRWSQAQLLRPQALDLVSRDGKHVVPSRWSSDIASLIKLAAQDNDVTRIFVNPAIKQQLCLDAGNDRDWLRKVRPWFQHRAHMHVRLRCPADSLECEDQPLPPPGDGCGAELQSWFEPPKPGTTKPEKKTPPPLPPSCQALLDEHVL</sequence>
<protein>
    <recommendedName>
        <fullName evidence="1">Penicillin-insensitive murein endopeptidase</fullName>
        <ecNumber evidence="1">3.4.24.-</ecNumber>
    </recommendedName>
    <alternativeName>
        <fullName evidence="1">D-alanyl-D-alanine-endopeptidase</fullName>
        <shortName evidence="1">DD-endopeptidase</shortName>
    </alternativeName>
</protein>
<keyword id="KW-1015">Disulfide bond</keyword>
<keyword id="KW-0378">Hydrolase</keyword>
<keyword id="KW-0479">Metal-binding</keyword>
<keyword id="KW-0482">Metalloprotease</keyword>
<keyword id="KW-0574">Periplasm</keyword>
<keyword id="KW-0645">Protease</keyword>
<keyword id="KW-0732">Signal</keyword>
<keyword id="KW-0862">Zinc</keyword>
<name>MEPA_SALA4</name>
<feature type="signal peptide" evidence="1">
    <location>
        <begin position="1"/>
        <end position="19"/>
    </location>
</feature>
<feature type="chain" id="PRO_1000186105" description="Penicillin-insensitive murein endopeptidase">
    <location>
        <begin position="20"/>
        <end position="274"/>
    </location>
</feature>
<feature type="region of interest" description="Disordered" evidence="2">
    <location>
        <begin position="225"/>
        <end position="274"/>
    </location>
</feature>
<feature type="binding site" evidence="1">
    <location>
        <position position="110"/>
    </location>
    <ligand>
        <name>Zn(2+)</name>
        <dbReference type="ChEBI" id="CHEBI:29105"/>
        <label>1</label>
    </ligand>
</feature>
<feature type="binding site" evidence="1">
    <location>
        <position position="113"/>
    </location>
    <ligand>
        <name>Zn(2+)</name>
        <dbReference type="ChEBI" id="CHEBI:29105"/>
        <label>1</label>
    </ligand>
</feature>
<feature type="binding site" evidence="1">
    <location>
        <position position="120"/>
    </location>
    <ligand>
        <name>Zn(2+)</name>
        <dbReference type="ChEBI" id="CHEBI:29105"/>
        <label>1</label>
    </ligand>
</feature>
<feature type="binding site" evidence="1">
    <location>
        <position position="147"/>
    </location>
    <ligand>
        <name>Zn(2+)</name>
        <dbReference type="ChEBI" id="CHEBI:29105"/>
        <label>2</label>
    </ligand>
</feature>
<feature type="binding site" evidence="1">
    <location>
        <position position="150"/>
    </location>
    <ligand>
        <name>Zn(2+)</name>
        <dbReference type="ChEBI" id="CHEBI:29105"/>
        <label>2</label>
    </ligand>
</feature>
<feature type="binding site" evidence="1">
    <location>
        <position position="211"/>
    </location>
    <ligand>
        <name>Zn(2+)</name>
        <dbReference type="ChEBI" id="CHEBI:29105"/>
        <label>1</label>
    </ligand>
</feature>
<feature type="disulfide bond" evidence="1">
    <location>
        <begin position="44"/>
        <end position="265"/>
    </location>
</feature>
<feature type="disulfide bond" evidence="1">
    <location>
        <begin position="187"/>
        <end position="235"/>
    </location>
</feature>
<feature type="disulfide bond" evidence="1">
    <location>
        <begin position="216"/>
        <end position="223"/>
    </location>
</feature>
<organism>
    <name type="scientific">Salmonella agona (strain SL483)</name>
    <dbReference type="NCBI Taxonomy" id="454166"/>
    <lineage>
        <taxon>Bacteria</taxon>
        <taxon>Pseudomonadati</taxon>
        <taxon>Pseudomonadota</taxon>
        <taxon>Gammaproteobacteria</taxon>
        <taxon>Enterobacterales</taxon>
        <taxon>Enterobacteriaceae</taxon>
        <taxon>Salmonella</taxon>
    </lineage>
</organism>
<reference key="1">
    <citation type="journal article" date="2011" name="J. Bacteriol.">
        <title>Comparative genomics of 28 Salmonella enterica isolates: evidence for CRISPR-mediated adaptive sublineage evolution.</title>
        <authorList>
            <person name="Fricke W.F."/>
            <person name="Mammel M.K."/>
            <person name="McDermott P.F."/>
            <person name="Tartera C."/>
            <person name="White D.G."/>
            <person name="Leclerc J.E."/>
            <person name="Ravel J."/>
            <person name="Cebula T.A."/>
        </authorList>
    </citation>
    <scope>NUCLEOTIDE SEQUENCE [LARGE SCALE GENOMIC DNA]</scope>
    <source>
        <strain>SL483</strain>
    </source>
</reference>
<proteinExistence type="inferred from homology"/>
<accession>B5EZR5</accession>
<gene>
    <name evidence="1" type="primary">mepA</name>
    <name type="ordered locus">SeAg_B2523</name>
</gene>
<dbReference type="EC" id="3.4.24.-" evidence="1"/>
<dbReference type="EMBL" id="CP001138">
    <property type="protein sequence ID" value="ACH51431.1"/>
    <property type="molecule type" value="Genomic_DNA"/>
</dbReference>
<dbReference type="RefSeq" id="WP_000750428.1">
    <property type="nucleotide sequence ID" value="NC_011149.1"/>
</dbReference>
<dbReference type="SMR" id="B5EZR5"/>
<dbReference type="MEROPS" id="M74.001"/>
<dbReference type="KEGG" id="sea:SeAg_B2523"/>
<dbReference type="HOGENOM" id="CLU_052496_0_0_6"/>
<dbReference type="Proteomes" id="UP000008819">
    <property type="component" value="Chromosome"/>
</dbReference>
<dbReference type="GO" id="GO:0030288">
    <property type="term" value="C:outer membrane-bounded periplasmic space"/>
    <property type="evidence" value="ECO:0007669"/>
    <property type="project" value="InterPro"/>
</dbReference>
<dbReference type="GO" id="GO:0046872">
    <property type="term" value="F:metal ion binding"/>
    <property type="evidence" value="ECO:0007669"/>
    <property type="project" value="UniProtKB-KW"/>
</dbReference>
<dbReference type="GO" id="GO:0004222">
    <property type="term" value="F:metalloendopeptidase activity"/>
    <property type="evidence" value="ECO:0007669"/>
    <property type="project" value="UniProtKB-UniRule"/>
</dbReference>
<dbReference type="GO" id="GO:0004252">
    <property type="term" value="F:serine-type endopeptidase activity"/>
    <property type="evidence" value="ECO:0007669"/>
    <property type="project" value="InterPro"/>
</dbReference>
<dbReference type="GO" id="GO:0000270">
    <property type="term" value="P:peptidoglycan metabolic process"/>
    <property type="evidence" value="ECO:0007669"/>
    <property type="project" value="UniProtKB-UniRule"/>
</dbReference>
<dbReference type="GO" id="GO:0006508">
    <property type="term" value="P:proteolysis"/>
    <property type="evidence" value="ECO:0007669"/>
    <property type="project" value="UniProtKB-KW"/>
</dbReference>
<dbReference type="FunFam" id="3.30.1380.10:FF:000002">
    <property type="entry name" value="Penicillin-insensitive murein endopeptidase"/>
    <property type="match status" value="1"/>
</dbReference>
<dbReference type="Gene3D" id="3.30.1380.10">
    <property type="match status" value="1"/>
</dbReference>
<dbReference type="HAMAP" id="MF_01623">
    <property type="entry name" value="MepA"/>
    <property type="match status" value="1"/>
</dbReference>
<dbReference type="InterPro" id="IPR009045">
    <property type="entry name" value="Hedgehog_sig/DD-Pept_Zn-bd_sf"/>
</dbReference>
<dbReference type="InterPro" id="IPR005073">
    <property type="entry name" value="Peptidase_M74"/>
</dbReference>
<dbReference type="NCBIfam" id="NF006947">
    <property type="entry name" value="PRK09429.1"/>
    <property type="match status" value="1"/>
</dbReference>
<dbReference type="Pfam" id="PF03411">
    <property type="entry name" value="Peptidase_M74"/>
    <property type="match status" value="1"/>
</dbReference>
<dbReference type="PIRSF" id="PIRSF018455">
    <property type="entry name" value="MepA"/>
    <property type="match status" value="1"/>
</dbReference>
<dbReference type="SUPFAM" id="SSF55166">
    <property type="entry name" value="Hedgehog/DD-peptidase"/>
    <property type="match status" value="1"/>
</dbReference>